<sequence length="164" mass="17869">MVNPTVFFDIAVDGEPLGRVSFELFADKVPKTAENFRALSTGEKGFGYKGSCFHRIIPGFMCQGGDFTRHNGTGGKSIYGEKFDDENFILKHTGPGILSMANAGPNTNGSQFFICTAKTEWLDGKHVVFGKVKEGMNIVEAMERFGSRNGKTSKKITIADCGQI</sequence>
<protein>
    <recommendedName>
        <fullName>Peptidyl-prolyl cis-trans isomerase A</fullName>
        <shortName>PPIase A</shortName>
        <ecNumber evidence="2">5.2.1.8</ecNumber>
    </recommendedName>
    <alternativeName>
        <fullName>Cyclophilin A</fullName>
    </alternativeName>
    <alternativeName>
        <fullName>Cyclosporin A-binding protein</fullName>
    </alternativeName>
    <alternativeName>
        <fullName>Rotamase A</fullName>
    </alternativeName>
    <component>
        <recommendedName>
            <fullName>Peptidyl-prolyl cis-trans isomerase A, N-terminally processed</fullName>
        </recommendedName>
    </component>
</protein>
<gene>
    <name type="primary">PPIA</name>
</gene>
<organism>
    <name type="scientific">Bos taurus</name>
    <name type="common">Bovine</name>
    <dbReference type="NCBI Taxonomy" id="9913"/>
    <lineage>
        <taxon>Eukaryota</taxon>
        <taxon>Metazoa</taxon>
        <taxon>Chordata</taxon>
        <taxon>Craniata</taxon>
        <taxon>Vertebrata</taxon>
        <taxon>Euteleostomi</taxon>
        <taxon>Mammalia</taxon>
        <taxon>Eutheria</taxon>
        <taxon>Laurasiatheria</taxon>
        <taxon>Artiodactyla</taxon>
        <taxon>Ruminantia</taxon>
        <taxon>Pecora</taxon>
        <taxon>Bovidae</taxon>
        <taxon>Bovinae</taxon>
        <taxon>Bos</taxon>
    </lineage>
</organism>
<reference key="1">
    <citation type="submission" date="2005-01" db="EMBL/GenBank/DDBJ databases">
        <title>Analysis of sequences obtained from constructed full-length bovine cDNA libraries.</title>
        <authorList>
            <person name="Yu J."/>
            <person name="Meng Y."/>
            <person name="Wang Z."/>
            <person name="Hansen C."/>
            <person name="Li C."/>
            <person name="Moore S.S."/>
        </authorList>
    </citation>
    <scope>NUCLEOTIDE SEQUENCE [LARGE SCALE MRNA]</scope>
    <source>
        <tissue>Lymphoid epithelium</tissue>
    </source>
</reference>
<reference key="2">
    <citation type="submission" date="2005-09" db="EMBL/GenBank/DDBJ databases">
        <authorList>
            <consortium name="NIH - Mammalian Gene Collection (MGC) project"/>
        </authorList>
    </citation>
    <scope>NUCLEOTIDE SEQUENCE [LARGE SCALE MRNA]</scope>
    <source>
        <strain>Hereford</strain>
        <tissue>Testis</tissue>
    </source>
</reference>
<reference key="3">
    <citation type="journal article" date="1986" name="J. Biol. Chem.">
        <title>Isolation and amino acid sequence of cyclophilin.</title>
        <authorList>
            <person name="Harding M.W."/>
            <person name="Handschumacher R.E."/>
            <person name="Speicher D.W."/>
        </authorList>
    </citation>
    <scope>PROTEIN SEQUENCE OF 2-164</scope>
    <source>
        <tissue>Thymus</tissue>
    </source>
</reference>
<evidence type="ECO:0000250" key="1">
    <source>
        <dbReference type="UniProtKB" id="P17742"/>
    </source>
</evidence>
<evidence type="ECO:0000250" key="2">
    <source>
        <dbReference type="UniProtKB" id="P62937"/>
    </source>
</evidence>
<evidence type="ECO:0000255" key="3"/>
<evidence type="ECO:0000255" key="4">
    <source>
        <dbReference type="PROSITE-ProRule" id="PRU00156"/>
    </source>
</evidence>
<evidence type="ECO:0000269" key="5">
    <source>
    </source>
</evidence>
<evidence type="ECO:0000305" key="6"/>
<feature type="chain" id="PRO_0000423235" description="Peptidyl-prolyl cis-trans isomerase A">
    <location>
        <begin position="1"/>
        <end position="164"/>
    </location>
</feature>
<feature type="initiator methionine" description="Removed; alternate" evidence="2 5">
    <location>
        <position position="1"/>
    </location>
</feature>
<feature type="chain" id="PRO_0000064111" description="Peptidyl-prolyl cis-trans isomerase A, N-terminally processed">
    <location>
        <begin position="2"/>
        <end position="164"/>
    </location>
</feature>
<feature type="domain" description="PPIase cyclophilin-type" evidence="4">
    <location>
        <begin position="7"/>
        <end position="163"/>
    </location>
</feature>
<feature type="modified residue" description="N-acetylmethionine" evidence="2">
    <location>
        <position position="1"/>
    </location>
</feature>
<feature type="modified residue" description="N-acetylvaline; in Peptidyl-prolyl cis-trans isomerase A, N-terminally processed" evidence="2">
    <location>
        <position position="2"/>
    </location>
</feature>
<feature type="modified residue" description="N6-acetyllysine; alternate" evidence="2">
    <location>
        <position position="28"/>
    </location>
</feature>
<feature type="modified residue" description="N6-acetyllysine" evidence="2">
    <location>
        <position position="44"/>
    </location>
</feature>
<feature type="modified residue" description="N6-acetyllysine" evidence="2">
    <location>
        <position position="76"/>
    </location>
</feature>
<feature type="modified residue" description="Phosphoserine" evidence="2">
    <location>
        <position position="77"/>
    </location>
</feature>
<feature type="modified residue" description="N6-acetyllysine; alternate" evidence="2">
    <location>
        <position position="82"/>
    </location>
</feature>
<feature type="modified residue" description="Phosphothreonine" evidence="2">
    <location>
        <position position="93"/>
    </location>
</feature>
<feature type="modified residue" description="N6-acetyllysine" evidence="2">
    <location>
        <position position="125"/>
    </location>
</feature>
<feature type="modified residue" description="N6-acetyllysine" evidence="2">
    <location>
        <position position="131"/>
    </location>
</feature>
<feature type="modified residue" description="N6-acetyllysine" evidence="1">
    <location>
        <position position="133"/>
    </location>
</feature>
<feature type="glycosylation site" description="N-linked (GlcNAc...) asparagine" evidence="3">
    <location>
        <position position="108"/>
    </location>
</feature>
<feature type="disulfide bond">
    <location>
        <begin position="62"/>
        <end position="161"/>
    </location>
</feature>
<feature type="cross-link" description="Glycyl lysine isopeptide (Lys-Gly) (interchain with G-Cter in SUMO2); alternate" evidence="2">
    <location>
        <position position="28"/>
    </location>
</feature>
<feature type="cross-link" description="Glycyl lysine isopeptide (Lys-Gly) (interchain with G-Cter in ubiquitin); alternate" evidence="2">
    <location>
        <position position="28"/>
    </location>
</feature>
<feature type="cross-link" description="Glycyl lysine isopeptide (Lys-Gly) (interchain with G-Cter in SUMO2); alternate" evidence="2">
    <location>
        <position position="82"/>
    </location>
</feature>
<proteinExistence type="evidence at protein level"/>
<comment type="function">
    <text evidence="1 2">Catalyzes the cis-trans isomerization of proline imidic peptide bonds in oligopeptides (By similarity). Exerts a strong chemotactic effect on leukocytes partly through activation of one of its membrane receptors BSG/CD147, initiating a signaling cascade that culminates in MAPK/ERK activation (By similarity). Activates endothelial cells (ECs) in a proinflammatory manner by stimulating activation of NF-kappa-B and ERK, JNK and p38 MAP-kinases and by inducing expression of adhesion molecules including SELE and VCAM1 (By similarity). Induces apoptosis in ECs by promoting the FOXO1-dependent expression of CCL2 and BCL2L11 which are involved in EC chemotaxis and apoptosis (By similarity). In response to oxidative stress, initiates proapoptotic and antiapoptotic signaling in ECs via activation of NF-kappa-B and AKT1 and up-regulation of antiapoptotic protein BCL2 (By similarity). Negatively regulates MAP3K5/ASK1 kinase activity, autophosphorylation and oxidative stress-induced apoptosis mediated by MAP3K5/ASK1 (By similarity). Necessary for the assembly of TARDBP in heterogeneous nuclear ribonucleoprotein (hnRNP) complexes and regulates TARDBP binding to RNA UG repeats and TARDBP-dependent expression of HDAC6, ATG7 and VCP which are involved in clearance of protein aggregates (By similarity). Plays an important role in platelet activation and aggregation (By similarity). Regulates calcium mobilization and integrin ITGA2B:ITGB3 bidirectional signaling via increased ROS production as well as by facilitating the interaction between integrin and the cell cytoskeleton (By similarity). Binds heparan sulfate glycosaminoglycans (By similarity).</text>
</comment>
<comment type="catalytic activity">
    <reaction evidence="2">
        <text>[protein]-peptidylproline (omega=180) = [protein]-peptidylproline (omega=0)</text>
        <dbReference type="Rhea" id="RHEA:16237"/>
        <dbReference type="Rhea" id="RHEA-COMP:10747"/>
        <dbReference type="Rhea" id="RHEA-COMP:10748"/>
        <dbReference type="ChEBI" id="CHEBI:83833"/>
        <dbReference type="ChEBI" id="CHEBI:83834"/>
        <dbReference type="EC" id="5.2.1.8"/>
    </reaction>
</comment>
<comment type="activity regulation">
    <text evidence="2">Binds cyclosporin A (CsA). CsA mediates some of its effects via an inhibitory action on PPIase.</text>
</comment>
<comment type="subunit">
    <text evidence="1 2">Interacts with protein phosphatase PPP3CA/calcineurin A (By similarity). Interacts with isoform 2 of BSG/CD147 (By similarity). Interacts with FOXO1; the interaction promotes FOXO1 dephosphorylation, nuclear accumulation and transcriptional activity (By similarity). Interacts with integrin ITGA2B:ITGB3; the interaction is ROS and peptidyl-prolyl cis-trans isomerase (PPIase) activity-dependent and is increased in the presence of thrombin (By similarity). Interacts with MAP3K5 (By similarity). Interacts with TARDBP; the interaction is dependent on the RNA-binding activity of TARDBP and the PPIase activity of PPIA/CYPA and the acetylation of PPIA/CYPA at Lys-125 favors the interaction (By similarity). Interacts with HNRNPA1, HNRNPA2B1, HNRNPC, RBMX, HNRNPK and HNRNPM (By similarity).</text>
</comment>
<comment type="subcellular location">
    <subcellularLocation>
        <location evidence="2">Cytoplasm</location>
    </subcellularLocation>
    <subcellularLocation>
        <location evidence="2">Secreted</location>
    </subcellularLocation>
    <subcellularLocation>
        <location evidence="2">Nucleus</location>
    </subcellularLocation>
    <text evidence="2">Secretion occurs in response to oxidative stress in vascular smooth muscle through a vesicular secretory pathway that involves actin remodeling and myosin II activation, and mediates ERK1/2 activation.</text>
</comment>
<comment type="PTM">
    <text evidence="2">Acetylation at Lys-125 markedly inhibits catalysis of cis to trans isomerization (By similarity). PPIA acetylation also antagonizes the immunosuppressive effects of cyclosporine by inhibiting the sequential steps of cyclosporine binding and calcineurin inhibition (By similarity). Acetylation at Lys-125 favors the interaction with TARDBP (By similarity).</text>
</comment>
<comment type="similarity">
    <text evidence="6">Belongs to the cyclophilin-type PPIase family. PPIase A subfamily.</text>
</comment>
<accession>P62935</accession>
<accession>P04374</accession>
<accession>P10110</accession>
<accession>Q29580</accession>
<accession>Q56JX4</accession>
<keyword id="KW-0007">Acetylation</keyword>
<keyword id="KW-0053">Apoptosis</keyword>
<keyword id="KW-0963">Cytoplasm</keyword>
<keyword id="KW-0903">Direct protein sequencing</keyword>
<keyword id="KW-1015">Disulfide bond</keyword>
<keyword id="KW-0325">Glycoprotein</keyword>
<keyword id="KW-0413">Isomerase</keyword>
<keyword id="KW-1017">Isopeptide bond</keyword>
<keyword id="KW-0539">Nucleus</keyword>
<keyword id="KW-0597">Phosphoprotein</keyword>
<keyword id="KW-1185">Reference proteome</keyword>
<keyword id="KW-0697">Rotamase</keyword>
<keyword id="KW-0964">Secreted</keyword>
<keyword id="KW-0832">Ubl conjugation</keyword>
<dbReference type="EC" id="5.2.1.8" evidence="2"/>
<dbReference type="EMBL" id="AY911355">
    <property type="protein sequence ID" value="AAW82121.1"/>
    <property type="molecule type" value="mRNA"/>
</dbReference>
<dbReference type="EMBL" id="BC105173">
    <property type="protein sequence ID" value="AAI05174.1"/>
    <property type="molecule type" value="mRNA"/>
</dbReference>
<dbReference type="PIR" id="A01852">
    <property type="entry name" value="CSBOAB"/>
</dbReference>
<dbReference type="RefSeq" id="NP_847890.2">
    <property type="nucleotide sequence ID" value="NM_178320.3"/>
</dbReference>
<dbReference type="RefSeq" id="XP_005205627.1">
    <property type="nucleotide sequence ID" value="XM_005205570.1"/>
</dbReference>
<dbReference type="BMRB" id="P62935"/>
<dbReference type="SMR" id="P62935"/>
<dbReference type="BioGRID" id="158749">
    <property type="interactions" value="1"/>
</dbReference>
<dbReference type="FunCoup" id="P62935">
    <property type="interactions" value="1849"/>
</dbReference>
<dbReference type="STRING" id="9913.ENSBTAP00000015924"/>
<dbReference type="GlyCosmos" id="P62935">
    <property type="glycosylation" value="1 site, No reported glycans"/>
</dbReference>
<dbReference type="GlyGen" id="P62935">
    <property type="glycosylation" value="1 site"/>
</dbReference>
<dbReference type="PaxDb" id="9913-ENSBTAP00000015924"/>
<dbReference type="PeptideAtlas" id="P62935"/>
<dbReference type="Ensembl" id="ENSBTAT00000015924.5">
    <property type="protein sequence ID" value="ENSBTAP00000015924.4"/>
    <property type="gene ID" value="ENSBTAG00000012003.6"/>
</dbReference>
<dbReference type="GeneID" id="281418"/>
<dbReference type="KEGG" id="bta:281418"/>
<dbReference type="CTD" id="5478"/>
<dbReference type="VEuPathDB" id="HostDB:ENSBTAG00000012003"/>
<dbReference type="eggNOG" id="KOG0865">
    <property type="taxonomic scope" value="Eukaryota"/>
</dbReference>
<dbReference type="GeneTree" id="ENSGT00950000183087"/>
<dbReference type="HOGENOM" id="CLU_012062_4_3_1"/>
<dbReference type="InParanoid" id="P62935"/>
<dbReference type="OMA" id="CVSIYGH"/>
<dbReference type="OrthoDB" id="9768325at2759"/>
<dbReference type="TreeFam" id="TF316719"/>
<dbReference type="Reactome" id="R-BTA-210991">
    <property type="pathway name" value="Basigin interactions"/>
</dbReference>
<dbReference type="Reactome" id="R-BTA-6798695">
    <property type="pathway name" value="Neutrophil degranulation"/>
</dbReference>
<dbReference type="Proteomes" id="UP000009136">
    <property type="component" value="Chromosome 4"/>
</dbReference>
<dbReference type="Bgee" id="ENSBTAG00000012003">
    <property type="expression patterns" value="Expressed in Ammon's horn and 104 other cell types or tissues"/>
</dbReference>
<dbReference type="GO" id="GO:0005737">
    <property type="term" value="C:cytoplasm"/>
    <property type="evidence" value="ECO:0000250"/>
    <property type="project" value="UniProtKB"/>
</dbReference>
<dbReference type="GO" id="GO:0005829">
    <property type="term" value="C:cytosol"/>
    <property type="evidence" value="ECO:0000250"/>
    <property type="project" value="UniProtKB"/>
</dbReference>
<dbReference type="GO" id="GO:0005576">
    <property type="term" value="C:extracellular region"/>
    <property type="evidence" value="ECO:0000250"/>
    <property type="project" value="UniProtKB"/>
</dbReference>
<dbReference type="GO" id="GO:0005634">
    <property type="term" value="C:nucleus"/>
    <property type="evidence" value="ECO:0000250"/>
    <property type="project" value="UniProtKB"/>
</dbReference>
<dbReference type="GO" id="GO:0016018">
    <property type="term" value="F:cyclosporin A binding"/>
    <property type="evidence" value="ECO:0000318"/>
    <property type="project" value="GO_Central"/>
</dbReference>
<dbReference type="GO" id="GO:1904399">
    <property type="term" value="F:heparan sulfate binding"/>
    <property type="evidence" value="ECO:0000250"/>
    <property type="project" value="UniProtKB"/>
</dbReference>
<dbReference type="GO" id="GO:0005178">
    <property type="term" value="F:integrin binding"/>
    <property type="evidence" value="ECO:0000250"/>
    <property type="project" value="UniProtKB"/>
</dbReference>
<dbReference type="GO" id="GO:0003755">
    <property type="term" value="F:peptidyl-prolyl cis-trans isomerase activity"/>
    <property type="evidence" value="ECO:0000250"/>
    <property type="project" value="UniProtKB"/>
</dbReference>
<dbReference type="GO" id="GO:0032148">
    <property type="term" value="P:activation of protein kinase B activity"/>
    <property type="evidence" value="ECO:0000250"/>
    <property type="project" value="UniProtKB"/>
</dbReference>
<dbReference type="GO" id="GO:0006915">
    <property type="term" value="P:apoptotic process"/>
    <property type="evidence" value="ECO:0000250"/>
    <property type="project" value="UniProtKB"/>
</dbReference>
<dbReference type="GO" id="GO:0060352">
    <property type="term" value="P:cell adhesion molecule production"/>
    <property type="evidence" value="ECO:0000250"/>
    <property type="project" value="UniProtKB"/>
</dbReference>
<dbReference type="GO" id="GO:0034599">
    <property type="term" value="P:cellular response to oxidative stress"/>
    <property type="evidence" value="ECO:0000250"/>
    <property type="project" value="UniProtKB"/>
</dbReference>
<dbReference type="GO" id="GO:0042118">
    <property type="term" value="P:endothelial cell activation"/>
    <property type="evidence" value="ECO:0000250"/>
    <property type="project" value="UniProtKB"/>
</dbReference>
<dbReference type="GO" id="GO:0030595">
    <property type="term" value="P:leukocyte chemotaxis"/>
    <property type="evidence" value="ECO:0000250"/>
    <property type="project" value="UniProtKB"/>
</dbReference>
<dbReference type="GO" id="GO:1902176">
    <property type="term" value="P:negative regulation of oxidative stress-induced intrinsic apoptotic signaling pathway"/>
    <property type="evidence" value="ECO:0000250"/>
    <property type="project" value="UniProtKB"/>
</dbReference>
<dbReference type="GO" id="GO:0061944">
    <property type="term" value="P:negative regulation of protein K48-linked ubiquitination"/>
    <property type="evidence" value="ECO:0000250"/>
    <property type="project" value="UniProtKB"/>
</dbReference>
<dbReference type="GO" id="GO:0006469">
    <property type="term" value="P:negative regulation of protein kinase activity"/>
    <property type="evidence" value="ECO:0000250"/>
    <property type="project" value="UniProtKB"/>
</dbReference>
<dbReference type="GO" id="GO:0001933">
    <property type="term" value="P:negative regulation of protein phosphorylation"/>
    <property type="evidence" value="ECO:0000250"/>
    <property type="project" value="UniProtKB"/>
</dbReference>
<dbReference type="GO" id="GO:0032873">
    <property type="term" value="P:negative regulation of stress-activated MAPK cascade"/>
    <property type="evidence" value="ECO:0000250"/>
    <property type="project" value="UniProtKB"/>
</dbReference>
<dbReference type="GO" id="GO:0030593">
    <property type="term" value="P:neutrophil chemotaxis"/>
    <property type="evidence" value="ECO:0000250"/>
    <property type="project" value="UniProtKB"/>
</dbReference>
<dbReference type="GO" id="GO:0030168">
    <property type="term" value="P:platelet activation"/>
    <property type="evidence" value="ECO:0000250"/>
    <property type="project" value="UniProtKB"/>
</dbReference>
<dbReference type="GO" id="GO:0070527">
    <property type="term" value="P:platelet aggregation"/>
    <property type="evidence" value="ECO:0000250"/>
    <property type="project" value="UniProtKB"/>
</dbReference>
<dbReference type="GO" id="GO:0043410">
    <property type="term" value="P:positive regulation of MAPK cascade"/>
    <property type="evidence" value="ECO:0000250"/>
    <property type="project" value="UniProtKB"/>
</dbReference>
<dbReference type="GO" id="GO:0051092">
    <property type="term" value="P:positive regulation of NF-kappaB transcription factor activity"/>
    <property type="evidence" value="ECO:0000250"/>
    <property type="project" value="UniProtKB"/>
</dbReference>
<dbReference type="GO" id="GO:0001934">
    <property type="term" value="P:positive regulation of protein phosphorylation"/>
    <property type="evidence" value="ECO:0000250"/>
    <property type="project" value="UniProtKB"/>
</dbReference>
<dbReference type="GO" id="GO:0006457">
    <property type="term" value="P:protein folding"/>
    <property type="evidence" value="ECO:0000318"/>
    <property type="project" value="GO_Central"/>
</dbReference>
<dbReference type="GO" id="GO:0000413">
    <property type="term" value="P:protein peptidyl-prolyl isomerization"/>
    <property type="evidence" value="ECO:0000250"/>
    <property type="project" value="UniProtKB"/>
</dbReference>
<dbReference type="GO" id="GO:2001233">
    <property type="term" value="P:regulation of apoptotic signaling pathway"/>
    <property type="evidence" value="ECO:0000250"/>
    <property type="project" value="UniProtKB"/>
</dbReference>
<dbReference type="GO" id="GO:0045069">
    <property type="term" value="P:regulation of viral genome replication"/>
    <property type="evidence" value="ECO:0000250"/>
    <property type="project" value="UniProtKB"/>
</dbReference>
<dbReference type="CDD" id="cd01926">
    <property type="entry name" value="cyclophilin_ABH_like"/>
    <property type="match status" value="1"/>
</dbReference>
<dbReference type="FunFam" id="2.40.100.10:FF:000011">
    <property type="entry name" value="Peptidyl-prolyl cis-trans isomerase A"/>
    <property type="match status" value="1"/>
</dbReference>
<dbReference type="Gene3D" id="2.40.100.10">
    <property type="entry name" value="Cyclophilin-like"/>
    <property type="match status" value="1"/>
</dbReference>
<dbReference type="InterPro" id="IPR029000">
    <property type="entry name" value="Cyclophilin-like_dom_sf"/>
</dbReference>
<dbReference type="InterPro" id="IPR024936">
    <property type="entry name" value="Cyclophilin-type_PPIase"/>
</dbReference>
<dbReference type="InterPro" id="IPR020892">
    <property type="entry name" value="Cyclophilin-type_PPIase_CS"/>
</dbReference>
<dbReference type="InterPro" id="IPR002130">
    <property type="entry name" value="Cyclophilin-type_PPIase_dom"/>
</dbReference>
<dbReference type="PANTHER" id="PTHR11071">
    <property type="entry name" value="PEPTIDYL-PROLYL CIS-TRANS ISOMERASE"/>
    <property type="match status" value="1"/>
</dbReference>
<dbReference type="PANTHER" id="PTHR11071:SF490">
    <property type="entry name" value="PEPTIDYL-PROLYL CIS-TRANS ISOMERASE A"/>
    <property type="match status" value="1"/>
</dbReference>
<dbReference type="Pfam" id="PF00160">
    <property type="entry name" value="Pro_isomerase"/>
    <property type="match status" value="1"/>
</dbReference>
<dbReference type="PIRSF" id="PIRSF001467">
    <property type="entry name" value="Peptidylpro_ismrse"/>
    <property type="match status" value="1"/>
</dbReference>
<dbReference type="PRINTS" id="PR00153">
    <property type="entry name" value="CSAPPISMRASE"/>
</dbReference>
<dbReference type="SUPFAM" id="SSF50891">
    <property type="entry name" value="Cyclophilin-like"/>
    <property type="match status" value="1"/>
</dbReference>
<dbReference type="PROSITE" id="PS00170">
    <property type="entry name" value="CSA_PPIASE_1"/>
    <property type="match status" value="1"/>
</dbReference>
<dbReference type="PROSITE" id="PS50072">
    <property type="entry name" value="CSA_PPIASE_2"/>
    <property type="match status" value="1"/>
</dbReference>
<name>PPIA_BOVIN</name>